<name>RECO_STRCO</name>
<keyword id="KW-0227">DNA damage</keyword>
<keyword id="KW-0233">DNA recombination</keyword>
<keyword id="KW-0234">DNA repair</keyword>
<keyword id="KW-1185">Reference proteome</keyword>
<comment type="function">
    <text evidence="1">Involved in DNA repair and RecF pathway recombination.</text>
</comment>
<comment type="similarity">
    <text evidence="2">Belongs to the RecO family.</text>
</comment>
<comment type="sequence caution" evidence="2">
    <conflict type="erroneous initiation">
        <sequence resource="EMBL-CDS" id="CAB69731"/>
    </conflict>
</comment>
<sequence length="248" mass="26810">MSLFRDDGIVLRTQKLGEADRIITLLTRGHGRVRAVARGVRRTKSKFGARLEPFSHVDVQFFSKGSELVGRGLPLCTQSETIAPYGGGIVTDYARYTAGTAMLETAERFTDHEGEPAVQQYLLLVGALRTLARGEHAPTLVLDAFLLRSLAVNGYAPTFGDCAKCGMPGPNRFFSVGSGGSVCVDCRVPGSVVPSPQALELLGALLTGDWGTADAAEPRYVREGSGLVSAYLHWHLERGLRSLRYVEK</sequence>
<reference key="1">
    <citation type="journal article" date="2002" name="Nature">
        <title>Complete genome sequence of the model actinomycete Streptomyces coelicolor A3(2).</title>
        <authorList>
            <person name="Bentley S.D."/>
            <person name="Chater K.F."/>
            <person name="Cerdeno-Tarraga A.-M."/>
            <person name="Challis G.L."/>
            <person name="Thomson N.R."/>
            <person name="James K.D."/>
            <person name="Harris D.E."/>
            <person name="Quail M.A."/>
            <person name="Kieser H."/>
            <person name="Harper D."/>
            <person name="Bateman A."/>
            <person name="Brown S."/>
            <person name="Chandra G."/>
            <person name="Chen C.W."/>
            <person name="Collins M."/>
            <person name="Cronin A."/>
            <person name="Fraser A."/>
            <person name="Goble A."/>
            <person name="Hidalgo J."/>
            <person name="Hornsby T."/>
            <person name="Howarth S."/>
            <person name="Huang C.-H."/>
            <person name="Kieser T."/>
            <person name="Larke L."/>
            <person name="Murphy L.D."/>
            <person name="Oliver K."/>
            <person name="O'Neil S."/>
            <person name="Rabbinowitsch E."/>
            <person name="Rajandream M.A."/>
            <person name="Rutherford K.M."/>
            <person name="Rutter S."/>
            <person name="Seeger K."/>
            <person name="Saunders D."/>
            <person name="Sharp S."/>
            <person name="Squares R."/>
            <person name="Squares S."/>
            <person name="Taylor K."/>
            <person name="Warren T."/>
            <person name="Wietzorrek A."/>
            <person name="Woodward J.R."/>
            <person name="Barrell B.G."/>
            <person name="Parkhill J."/>
            <person name="Hopwood D.A."/>
        </authorList>
    </citation>
    <scope>NUCLEOTIDE SEQUENCE [LARGE SCALE GENOMIC DNA]</scope>
    <source>
        <strain>ATCC BAA-471 / A3(2) / M145</strain>
    </source>
</reference>
<accession>Q9L2H3</accession>
<proteinExistence type="inferred from homology"/>
<evidence type="ECO:0000250" key="1"/>
<evidence type="ECO:0000305" key="2"/>
<protein>
    <recommendedName>
        <fullName>DNA repair protein RecO</fullName>
    </recommendedName>
    <alternativeName>
        <fullName>Recombination protein O</fullName>
    </alternativeName>
</protein>
<organism>
    <name type="scientific">Streptomyces coelicolor (strain ATCC BAA-471 / A3(2) / M145)</name>
    <dbReference type="NCBI Taxonomy" id="100226"/>
    <lineage>
        <taxon>Bacteria</taxon>
        <taxon>Bacillati</taxon>
        <taxon>Actinomycetota</taxon>
        <taxon>Actinomycetes</taxon>
        <taxon>Kitasatosporales</taxon>
        <taxon>Streptomycetaceae</taxon>
        <taxon>Streptomyces</taxon>
        <taxon>Streptomyces albidoflavus group</taxon>
    </lineage>
</organism>
<dbReference type="EMBL" id="AL939112">
    <property type="protein sequence ID" value="CAB69731.1"/>
    <property type="status" value="ALT_INIT"/>
    <property type="molecule type" value="Genomic_DNA"/>
</dbReference>
<dbReference type="RefSeq" id="NP_626750.1">
    <property type="nucleotide sequence ID" value="NC_003888.3"/>
</dbReference>
<dbReference type="RefSeq" id="WP_030863758.1">
    <property type="nucleotide sequence ID" value="NZ_VNID01000001.1"/>
</dbReference>
<dbReference type="SMR" id="Q9L2H3"/>
<dbReference type="FunCoup" id="Q9L2H3">
    <property type="interactions" value="2"/>
</dbReference>
<dbReference type="STRING" id="100226.gene:17760112"/>
<dbReference type="PaxDb" id="100226-SCO2510"/>
<dbReference type="KEGG" id="sco:SCO2510"/>
<dbReference type="PATRIC" id="fig|100226.15.peg.2555"/>
<dbReference type="eggNOG" id="COG1381">
    <property type="taxonomic scope" value="Bacteria"/>
</dbReference>
<dbReference type="HOGENOM" id="CLU_066632_1_1_11"/>
<dbReference type="InParanoid" id="Q9L2H3"/>
<dbReference type="OrthoDB" id="9812244at2"/>
<dbReference type="PhylomeDB" id="Q9L2H3"/>
<dbReference type="Proteomes" id="UP000001973">
    <property type="component" value="Chromosome"/>
</dbReference>
<dbReference type="GO" id="GO:0043590">
    <property type="term" value="C:bacterial nucleoid"/>
    <property type="evidence" value="ECO:0000318"/>
    <property type="project" value="GO_Central"/>
</dbReference>
<dbReference type="GO" id="GO:0006310">
    <property type="term" value="P:DNA recombination"/>
    <property type="evidence" value="ECO:0007669"/>
    <property type="project" value="UniProtKB-UniRule"/>
</dbReference>
<dbReference type="GO" id="GO:0006302">
    <property type="term" value="P:double-strand break repair"/>
    <property type="evidence" value="ECO:0000318"/>
    <property type="project" value="GO_Central"/>
</dbReference>
<dbReference type="Gene3D" id="2.40.50.140">
    <property type="entry name" value="Nucleic acid-binding proteins"/>
    <property type="match status" value="1"/>
</dbReference>
<dbReference type="Gene3D" id="1.20.1440.120">
    <property type="entry name" value="Recombination protein O, C-terminal domain"/>
    <property type="match status" value="1"/>
</dbReference>
<dbReference type="HAMAP" id="MF_00201">
    <property type="entry name" value="RecO"/>
    <property type="match status" value="1"/>
</dbReference>
<dbReference type="InterPro" id="IPR037278">
    <property type="entry name" value="ARFGAP/RecO"/>
</dbReference>
<dbReference type="InterPro" id="IPR022572">
    <property type="entry name" value="DNA_rep/recomb_RecO_N"/>
</dbReference>
<dbReference type="InterPro" id="IPR012340">
    <property type="entry name" value="NA-bd_OB-fold"/>
</dbReference>
<dbReference type="InterPro" id="IPR003717">
    <property type="entry name" value="RecO"/>
</dbReference>
<dbReference type="InterPro" id="IPR042242">
    <property type="entry name" value="RecO_C"/>
</dbReference>
<dbReference type="NCBIfam" id="TIGR00613">
    <property type="entry name" value="reco"/>
    <property type="match status" value="1"/>
</dbReference>
<dbReference type="PANTHER" id="PTHR33991">
    <property type="entry name" value="DNA REPAIR PROTEIN RECO"/>
    <property type="match status" value="1"/>
</dbReference>
<dbReference type="PANTHER" id="PTHR33991:SF1">
    <property type="entry name" value="DNA REPAIR PROTEIN RECO"/>
    <property type="match status" value="1"/>
</dbReference>
<dbReference type="Pfam" id="PF02565">
    <property type="entry name" value="RecO_C"/>
    <property type="match status" value="1"/>
</dbReference>
<dbReference type="Pfam" id="PF11967">
    <property type="entry name" value="RecO_N"/>
    <property type="match status" value="1"/>
</dbReference>
<dbReference type="SUPFAM" id="SSF57863">
    <property type="entry name" value="ArfGap/RecO-like zinc finger"/>
    <property type="match status" value="1"/>
</dbReference>
<dbReference type="SUPFAM" id="SSF50249">
    <property type="entry name" value="Nucleic acid-binding proteins"/>
    <property type="match status" value="1"/>
</dbReference>
<gene>
    <name type="primary">recO</name>
    <name type="ordered locus">SCO2510</name>
    <name type="ORF">SCC121.13c</name>
</gene>
<feature type="chain" id="PRO_0000205007" description="DNA repair protein RecO">
    <location>
        <begin position="1"/>
        <end position="248"/>
    </location>
</feature>